<comment type="function">
    <text evidence="1">Specifically dimethylates two adjacent adenosines (A1518 and A1519) in the loop of a conserved hairpin near the 3'-end of 16S rRNA in the 30S particle. May play a critical role in biogenesis of 30S subunits.</text>
</comment>
<comment type="catalytic activity">
    <reaction evidence="1">
        <text>adenosine(1518)/adenosine(1519) in 16S rRNA + 4 S-adenosyl-L-methionine = N(6)-dimethyladenosine(1518)/N(6)-dimethyladenosine(1519) in 16S rRNA + 4 S-adenosyl-L-homocysteine + 4 H(+)</text>
        <dbReference type="Rhea" id="RHEA:19609"/>
        <dbReference type="Rhea" id="RHEA-COMP:10232"/>
        <dbReference type="Rhea" id="RHEA-COMP:10233"/>
        <dbReference type="ChEBI" id="CHEBI:15378"/>
        <dbReference type="ChEBI" id="CHEBI:57856"/>
        <dbReference type="ChEBI" id="CHEBI:59789"/>
        <dbReference type="ChEBI" id="CHEBI:74411"/>
        <dbReference type="ChEBI" id="CHEBI:74493"/>
        <dbReference type="EC" id="2.1.1.182"/>
    </reaction>
</comment>
<comment type="subcellular location">
    <subcellularLocation>
        <location evidence="1">Cytoplasm</location>
    </subcellularLocation>
</comment>
<comment type="similarity">
    <text evidence="1">Belongs to the class I-like SAM-binding methyltransferase superfamily. rRNA adenine N(6)-methyltransferase family. RsmA subfamily.</text>
</comment>
<feature type="chain" id="PRO_0000101634" description="Ribosomal RNA small subunit methyltransferase A">
    <location>
        <begin position="1"/>
        <end position="285"/>
    </location>
</feature>
<feature type="binding site" evidence="1">
    <location>
        <position position="30"/>
    </location>
    <ligand>
        <name>S-adenosyl-L-methionine</name>
        <dbReference type="ChEBI" id="CHEBI:59789"/>
    </ligand>
</feature>
<feature type="binding site" evidence="1">
    <location>
        <position position="32"/>
    </location>
    <ligand>
        <name>S-adenosyl-L-methionine</name>
        <dbReference type="ChEBI" id="CHEBI:59789"/>
    </ligand>
</feature>
<feature type="binding site" evidence="1">
    <location>
        <position position="57"/>
    </location>
    <ligand>
        <name>S-adenosyl-L-methionine</name>
        <dbReference type="ChEBI" id="CHEBI:59789"/>
    </ligand>
</feature>
<feature type="binding site" evidence="1">
    <location>
        <position position="78"/>
    </location>
    <ligand>
        <name>S-adenosyl-L-methionine</name>
        <dbReference type="ChEBI" id="CHEBI:59789"/>
    </ligand>
</feature>
<feature type="binding site" evidence="1">
    <location>
        <position position="101"/>
    </location>
    <ligand>
        <name>S-adenosyl-L-methionine</name>
        <dbReference type="ChEBI" id="CHEBI:59789"/>
    </ligand>
</feature>
<feature type="binding site" evidence="1">
    <location>
        <position position="121"/>
    </location>
    <ligand>
        <name>S-adenosyl-L-methionine</name>
        <dbReference type="ChEBI" id="CHEBI:59789"/>
    </ligand>
</feature>
<protein>
    <recommendedName>
        <fullName evidence="1">Ribosomal RNA small subunit methyltransferase A</fullName>
        <ecNumber evidence="1">2.1.1.182</ecNumber>
    </recommendedName>
    <alternativeName>
        <fullName evidence="1">16S rRNA (adenine(1518)-N(6)/adenine(1519)-N(6))-dimethyltransferase</fullName>
    </alternativeName>
    <alternativeName>
        <fullName evidence="1">16S rRNA dimethyladenosine transferase</fullName>
    </alternativeName>
    <alternativeName>
        <fullName evidence="1">16S rRNA dimethylase</fullName>
    </alternativeName>
    <alternativeName>
        <fullName evidence="1">S-adenosylmethionine-6-N', N'-adenosyl(rRNA) dimethyltransferase</fullName>
    </alternativeName>
</protein>
<keyword id="KW-0963">Cytoplasm</keyword>
<keyword id="KW-0489">Methyltransferase</keyword>
<keyword id="KW-1185">Reference proteome</keyword>
<keyword id="KW-0694">RNA-binding</keyword>
<keyword id="KW-0698">rRNA processing</keyword>
<keyword id="KW-0949">S-adenosyl-L-methionine</keyword>
<keyword id="KW-0808">Transferase</keyword>
<reference key="1">
    <citation type="journal article" date="1998" name="Science">
        <title>Complete genome sequence of Treponema pallidum, the syphilis spirochete.</title>
        <authorList>
            <person name="Fraser C.M."/>
            <person name="Norris S.J."/>
            <person name="Weinstock G.M."/>
            <person name="White O."/>
            <person name="Sutton G.G."/>
            <person name="Dodson R.J."/>
            <person name="Gwinn M.L."/>
            <person name="Hickey E.K."/>
            <person name="Clayton R.A."/>
            <person name="Ketchum K.A."/>
            <person name="Sodergren E."/>
            <person name="Hardham J.M."/>
            <person name="McLeod M.P."/>
            <person name="Salzberg S.L."/>
            <person name="Peterson J.D."/>
            <person name="Khalak H.G."/>
            <person name="Richardson D.L."/>
            <person name="Howell J.K."/>
            <person name="Chidambaram M."/>
            <person name="Utterback T.R."/>
            <person name="McDonald L.A."/>
            <person name="Artiach P."/>
            <person name="Bowman C."/>
            <person name="Cotton M.D."/>
            <person name="Fujii C."/>
            <person name="Garland S.A."/>
            <person name="Hatch B."/>
            <person name="Horst K."/>
            <person name="Roberts K.M."/>
            <person name="Sandusky M."/>
            <person name="Weidman J.F."/>
            <person name="Smith H.O."/>
            <person name="Venter J.C."/>
        </authorList>
    </citation>
    <scope>NUCLEOTIDE SEQUENCE [LARGE SCALE GENOMIC DNA]</scope>
    <source>
        <strain>Nichols</strain>
    </source>
</reference>
<proteinExistence type="inferred from homology"/>
<gene>
    <name evidence="1" type="primary">rsmA</name>
    <name evidence="1" type="synonym">ksgA</name>
    <name type="ordered locus">TP_0337</name>
</gene>
<organism>
    <name type="scientific">Treponema pallidum (strain Nichols)</name>
    <dbReference type="NCBI Taxonomy" id="243276"/>
    <lineage>
        <taxon>Bacteria</taxon>
        <taxon>Pseudomonadati</taxon>
        <taxon>Spirochaetota</taxon>
        <taxon>Spirochaetia</taxon>
        <taxon>Spirochaetales</taxon>
        <taxon>Treponemataceae</taxon>
        <taxon>Treponema</taxon>
    </lineage>
</organism>
<sequence length="285" mass="32276">MCCPNYNSARALAQFLTERGLRMHKKWGQNFLLDPVLRTQLVKILAPERGERVWEIGAGIGAMTALLVQNSDFLTVFEIDRGFVQTLRKLFDAHVRVIEGDVLQQWHAAAAQEQPACVLGNLPYNIAARFIGNTIESGYIFKRMVVTVQKEIGLRMTALPAQKWYSYFSVLCQWQYEVRVIRNVAPVCFWPRPHVVSQALVLTKRNAVPSCVDPALFLHVTKTLFSARRKTVRNNLLTWQKRMPGGAAVCVEELCARAGIDARARAEQLSIYDFITLSDTLRALL</sequence>
<evidence type="ECO:0000255" key="1">
    <source>
        <dbReference type="HAMAP-Rule" id="MF_00607"/>
    </source>
</evidence>
<accession>O83357</accession>
<name>RSMA_TREPA</name>
<dbReference type="EC" id="2.1.1.182" evidence="1"/>
<dbReference type="EMBL" id="AE000520">
    <property type="protein sequence ID" value="AAC65323.1"/>
    <property type="molecule type" value="Genomic_DNA"/>
</dbReference>
<dbReference type="PIR" id="G71337">
    <property type="entry name" value="G71337"/>
</dbReference>
<dbReference type="RefSeq" id="WP_010881785.1">
    <property type="nucleotide sequence ID" value="NC_021490.2"/>
</dbReference>
<dbReference type="SMR" id="O83357"/>
<dbReference type="STRING" id="243276.TP_0337"/>
<dbReference type="EnsemblBacteria" id="AAC65323">
    <property type="protein sequence ID" value="AAC65323"/>
    <property type="gene ID" value="TP_0337"/>
</dbReference>
<dbReference type="GeneID" id="93876116"/>
<dbReference type="KEGG" id="tpa:TP_0337"/>
<dbReference type="KEGG" id="tpw:TPANIC_0337"/>
<dbReference type="eggNOG" id="COG0030">
    <property type="taxonomic scope" value="Bacteria"/>
</dbReference>
<dbReference type="HOGENOM" id="CLU_041220_0_2_12"/>
<dbReference type="OrthoDB" id="9814755at2"/>
<dbReference type="Proteomes" id="UP000000811">
    <property type="component" value="Chromosome"/>
</dbReference>
<dbReference type="GO" id="GO:0005829">
    <property type="term" value="C:cytosol"/>
    <property type="evidence" value="ECO:0007669"/>
    <property type="project" value="TreeGrafter"/>
</dbReference>
<dbReference type="GO" id="GO:0052908">
    <property type="term" value="F:16S rRNA (adenine(1518)-N(6)/adenine(1519)-N(6))-dimethyltransferase activity"/>
    <property type="evidence" value="ECO:0007669"/>
    <property type="project" value="UniProtKB-EC"/>
</dbReference>
<dbReference type="GO" id="GO:0003723">
    <property type="term" value="F:RNA binding"/>
    <property type="evidence" value="ECO:0007669"/>
    <property type="project" value="UniProtKB-KW"/>
</dbReference>
<dbReference type="CDD" id="cd02440">
    <property type="entry name" value="AdoMet_MTases"/>
    <property type="match status" value="1"/>
</dbReference>
<dbReference type="Gene3D" id="1.10.8.100">
    <property type="entry name" value="Ribosomal RNA adenine dimethylase-like, domain 2"/>
    <property type="match status" value="1"/>
</dbReference>
<dbReference type="Gene3D" id="3.40.50.150">
    <property type="entry name" value="Vaccinia Virus protein VP39"/>
    <property type="match status" value="1"/>
</dbReference>
<dbReference type="HAMAP" id="MF_00607">
    <property type="entry name" value="16SrRNA_methyltr_A"/>
    <property type="match status" value="1"/>
</dbReference>
<dbReference type="InterPro" id="IPR001737">
    <property type="entry name" value="KsgA/Erm"/>
</dbReference>
<dbReference type="InterPro" id="IPR023165">
    <property type="entry name" value="rRNA_Ade_diMease-like_C"/>
</dbReference>
<dbReference type="InterPro" id="IPR020596">
    <property type="entry name" value="rRNA_Ade_Mease_Trfase_CS"/>
</dbReference>
<dbReference type="InterPro" id="IPR020598">
    <property type="entry name" value="rRNA_Ade_methylase_Trfase_N"/>
</dbReference>
<dbReference type="InterPro" id="IPR011530">
    <property type="entry name" value="rRNA_adenine_dimethylase"/>
</dbReference>
<dbReference type="InterPro" id="IPR029063">
    <property type="entry name" value="SAM-dependent_MTases_sf"/>
</dbReference>
<dbReference type="NCBIfam" id="TIGR00755">
    <property type="entry name" value="ksgA"/>
    <property type="match status" value="1"/>
</dbReference>
<dbReference type="PANTHER" id="PTHR11727">
    <property type="entry name" value="DIMETHYLADENOSINE TRANSFERASE"/>
    <property type="match status" value="1"/>
</dbReference>
<dbReference type="PANTHER" id="PTHR11727:SF7">
    <property type="entry name" value="DIMETHYLADENOSINE TRANSFERASE-RELATED"/>
    <property type="match status" value="1"/>
</dbReference>
<dbReference type="Pfam" id="PF00398">
    <property type="entry name" value="RrnaAD"/>
    <property type="match status" value="1"/>
</dbReference>
<dbReference type="SMART" id="SM00650">
    <property type="entry name" value="rADc"/>
    <property type="match status" value="1"/>
</dbReference>
<dbReference type="SUPFAM" id="SSF53335">
    <property type="entry name" value="S-adenosyl-L-methionine-dependent methyltransferases"/>
    <property type="match status" value="1"/>
</dbReference>
<dbReference type="PROSITE" id="PS01131">
    <property type="entry name" value="RRNA_A_DIMETH"/>
    <property type="match status" value="1"/>
</dbReference>
<dbReference type="PROSITE" id="PS51689">
    <property type="entry name" value="SAM_RNA_A_N6_MT"/>
    <property type="match status" value="1"/>
</dbReference>